<accession>Q29KT5</accession>
<evidence type="ECO:0000250" key="1"/>
<evidence type="ECO:0000250" key="2">
    <source>
        <dbReference type="UniProtKB" id="Q08AE8"/>
    </source>
</evidence>
<evidence type="ECO:0000250" key="3">
    <source>
        <dbReference type="UniProtKB" id="Q9U1K1"/>
    </source>
</evidence>
<evidence type="ECO:0000255" key="4"/>
<evidence type="ECO:0000255" key="5">
    <source>
        <dbReference type="PROSITE-ProRule" id="PRU00406"/>
    </source>
</evidence>
<evidence type="ECO:0000255" key="6">
    <source>
        <dbReference type="PROSITE-ProRule" id="PRU00709"/>
    </source>
</evidence>
<evidence type="ECO:0000256" key="7">
    <source>
        <dbReference type="SAM" id="MobiDB-lite"/>
    </source>
</evidence>
<evidence type="ECO:0000305" key="8"/>
<proteinExistence type="inferred from homology"/>
<comment type="function">
    <text evidence="1">Acts as an actin nucleation factor, remains associated with the slow-growing pointed end of the new filament. Promotes dissociation of capu from the barbed end of actin filaments. Involved in intracellular vesicle transport along actin fibers, providing a novel link between actin cytoskeleton dynamics and intracellular transport. Required for localization of determinants within the developing oocyte to the posterior pole and to the dorsal anterior corner. Links Rho family signaling and Jnk function to the actin cytoskeleton (By similarity).</text>
</comment>
<comment type="subunit">
    <text evidence="1">Interacts with bsk, Rho1, Rac1, Cdc42 and wash. Interacts with capu (By similarity).</text>
</comment>
<comment type="subcellular location">
    <subcellularLocation>
        <location evidence="1">Cytoplasm</location>
        <location evidence="1">Cytoskeleton</location>
    </subcellularLocation>
    <subcellularLocation>
        <location evidence="1">Cytoplasm</location>
        <location evidence="1">Perinuclear region</location>
    </subcellularLocation>
    <subcellularLocation>
        <location evidence="1">Cell membrane</location>
        <topology evidence="1">Peripheral membrane protein</topology>
        <orientation evidence="1">Cytoplasmic side</orientation>
    </subcellularLocation>
    <subcellularLocation>
        <location evidence="1">Cytoplasmic vesicle membrane</location>
        <topology evidence="1">Peripheral membrane protein</topology>
        <orientation evidence="1">Cytoplasmic side</orientation>
    </subcellularLocation>
    <text evidence="1">Punctate spots in perinuclear region and cytoplasm.</text>
</comment>
<comment type="domain">
    <text evidence="3">Binds to actin monomers via the WH2 domain.</text>
</comment>
<comment type="domain">
    <text evidence="2">The Spir-box targets binding to intracellular membrane structures.</text>
</comment>
<comment type="PTM">
    <text evidence="3">Phosphorylated by Jnk kinase (bsk).</text>
</comment>
<comment type="similarity">
    <text evidence="8">Belongs to the spire family.</text>
</comment>
<comment type="sequence caution" evidence="8">
    <conflict type="erroneous gene model prediction">
        <sequence resource="EMBL-CDS" id="EAL33089"/>
    </conflict>
</comment>
<organism>
    <name type="scientific">Drosophila pseudoobscura pseudoobscura</name>
    <name type="common">Fruit fly</name>
    <dbReference type="NCBI Taxonomy" id="46245"/>
    <lineage>
        <taxon>Eukaryota</taxon>
        <taxon>Metazoa</taxon>
        <taxon>Ecdysozoa</taxon>
        <taxon>Arthropoda</taxon>
        <taxon>Hexapoda</taxon>
        <taxon>Insecta</taxon>
        <taxon>Pterygota</taxon>
        <taxon>Neoptera</taxon>
        <taxon>Endopterygota</taxon>
        <taxon>Diptera</taxon>
        <taxon>Brachycera</taxon>
        <taxon>Muscomorpha</taxon>
        <taxon>Ephydroidea</taxon>
        <taxon>Drosophilidae</taxon>
        <taxon>Drosophila</taxon>
        <taxon>Sophophora</taxon>
    </lineage>
</organism>
<dbReference type="EMBL" id="CH379061">
    <property type="protein sequence ID" value="EAL33089.2"/>
    <property type="status" value="ALT_SEQ"/>
    <property type="molecule type" value="Genomic_DNA"/>
</dbReference>
<dbReference type="SMR" id="Q29KT5"/>
<dbReference type="FunCoup" id="Q29KT5">
    <property type="interactions" value="386"/>
</dbReference>
<dbReference type="STRING" id="46245.Q29KT5"/>
<dbReference type="eggNOG" id="ENOG502QQPN">
    <property type="taxonomic scope" value="Eukaryota"/>
</dbReference>
<dbReference type="InParanoid" id="Q29KT5"/>
<dbReference type="ChiTaRS" id="spir">
    <property type="organism name" value="fly"/>
</dbReference>
<dbReference type="Proteomes" id="UP000001819">
    <property type="component" value="Unplaced"/>
</dbReference>
<dbReference type="GO" id="GO:0005938">
    <property type="term" value="C:cell cortex"/>
    <property type="evidence" value="ECO:0007669"/>
    <property type="project" value="TreeGrafter"/>
</dbReference>
<dbReference type="GO" id="GO:0030659">
    <property type="term" value="C:cytoplasmic vesicle membrane"/>
    <property type="evidence" value="ECO:0007669"/>
    <property type="project" value="UniProtKB-SubCell"/>
</dbReference>
<dbReference type="GO" id="GO:0005856">
    <property type="term" value="C:cytoskeleton"/>
    <property type="evidence" value="ECO:0007669"/>
    <property type="project" value="UniProtKB-SubCell"/>
</dbReference>
<dbReference type="GO" id="GO:0048471">
    <property type="term" value="C:perinuclear region of cytoplasm"/>
    <property type="evidence" value="ECO:0007669"/>
    <property type="project" value="UniProtKB-SubCell"/>
</dbReference>
<dbReference type="GO" id="GO:0005886">
    <property type="term" value="C:plasma membrane"/>
    <property type="evidence" value="ECO:0007669"/>
    <property type="project" value="UniProtKB-SubCell"/>
</dbReference>
<dbReference type="GO" id="GO:0003779">
    <property type="term" value="F:actin binding"/>
    <property type="evidence" value="ECO:0007669"/>
    <property type="project" value="UniProtKB-KW"/>
</dbReference>
<dbReference type="GO" id="GO:0008017">
    <property type="term" value="F:microtubule binding"/>
    <property type="evidence" value="ECO:0007669"/>
    <property type="project" value="TreeGrafter"/>
</dbReference>
<dbReference type="GO" id="GO:0051639">
    <property type="term" value="P:actin filament network formation"/>
    <property type="evidence" value="ECO:0007669"/>
    <property type="project" value="TreeGrafter"/>
</dbReference>
<dbReference type="GO" id="GO:0030041">
    <property type="term" value="P:actin filament polymerization"/>
    <property type="evidence" value="ECO:0007669"/>
    <property type="project" value="TreeGrafter"/>
</dbReference>
<dbReference type="GO" id="GO:0045010">
    <property type="term" value="P:actin nucleation"/>
    <property type="evidence" value="ECO:0007669"/>
    <property type="project" value="InterPro"/>
</dbReference>
<dbReference type="GO" id="GO:0036089">
    <property type="term" value="P:cleavage furrow formation"/>
    <property type="evidence" value="ECO:0007669"/>
    <property type="project" value="TreeGrafter"/>
</dbReference>
<dbReference type="GO" id="GO:0051295">
    <property type="term" value="P:establishment of meiotic spindle localization"/>
    <property type="evidence" value="ECO:0007669"/>
    <property type="project" value="TreeGrafter"/>
</dbReference>
<dbReference type="GO" id="GO:0048193">
    <property type="term" value="P:Golgi vesicle transport"/>
    <property type="evidence" value="ECO:0007669"/>
    <property type="project" value="TreeGrafter"/>
</dbReference>
<dbReference type="GO" id="GO:0046907">
    <property type="term" value="P:intracellular transport"/>
    <property type="evidence" value="ECO:0007669"/>
    <property type="project" value="TreeGrafter"/>
</dbReference>
<dbReference type="GO" id="GO:0040038">
    <property type="term" value="P:polar body extrusion after meiotic divisions"/>
    <property type="evidence" value="ECO:0007669"/>
    <property type="project" value="TreeGrafter"/>
</dbReference>
<dbReference type="GO" id="GO:0015031">
    <property type="term" value="P:protein transport"/>
    <property type="evidence" value="ECO:0007669"/>
    <property type="project" value="UniProtKB-KW"/>
</dbReference>
<dbReference type="CDD" id="cd15748">
    <property type="entry name" value="FYVE_SPIR"/>
    <property type="match status" value="1"/>
</dbReference>
<dbReference type="CDD" id="cd22068">
    <property type="entry name" value="WH2_DmSpire_r3-like"/>
    <property type="match status" value="1"/>
</dbReference>
<dbReference type="CDD" id="cd22069">
    <property type="entry name" value="WH2_DmSpire_r4"/>
    <property type="match status" value="1"/>
</dbReference>
<dbReference type="CDD" id="cd22078">
    <property type="entry name" value="WH2_Spire1_r2-like"/>
    <property type="match status" value="1"/>
</dbReference>
<dbReference type="CDD" id="cd22065">
    <property type="entry name" value="WH2_Spire_1-2_r1"/>
    <property type="match status" value="1"/>
</dbReference>
<dbReference type="Gene3D" id="1.10.510.10">
    <property type="entry name" value="Transferase(Phosphotransferase) domain 1"/>
    <property type="match status" value="1"/>
</dbReference>
<dbReference type="Gene3D" id="3.30.40.10">
    <property type="entry name" value="Zinc/RING finger domain, C3HC4 (zinc finger)"/>
    <property type="match status" value="1"/>
</dbReference>
<dbReference type="InterPro" id="IPR011019">
    <property type="entry name" value="KIND_dom"/>
</dbReference>
<dbReference type="InterPro" id="IPR029901">
    <property type="entry name" value="Spire"/>
</dbReference>
<dbReference type="InterPro" id="IPR003124">
    <property type="entry name" value="WH2_dom"/>
</dbReference>
<dbReference type="InterPro" id="IPR011011">
    <property type="entry name" value="Znf_FYVE_PHD"/>
</dbReference>
<dbReference type="InterPro" id="IPR013083">
    <property type="entry name" value="Znf_RING/FYVE/PHD"/>
</dbReference>
<dbReference type="PANTHER" id="PTHR21345:SF3">
    <property type="entry name" value="PROTEIN SPIRE"/>
    <property type="match status" value="1"/>
</dbReference>
<dbReference type="PANTHER" id="PTHR21345">
    <property type="entry name" value="SPIRE"/>
    <property type="match status" value="1"/>
</dbReference>
<dbReference type="Pfam" id="PF16474">
    <property type="entry name" value="KIND"/>
    <property type="match status" value="2"/>
</dbReference>
<dbReference type="SMART" id="SM00750">
    <property type="entry name" value="KIND"/>
    <property type="match status" value="1"/>
</dbReference>
<dbReference type="SMART" id="SM00246">
    <property type="entry name" value="WH2"/>
    <property type="match status" value="2"/>
</dbReference>
<dbReference type="SUPFAM" id="SSF57903">
    <property type="entry name" value="FYVE/PHD zinc finger"/>
    <property type="match status" value="1"/>
</dbReference>
<dbReference type="PROSITE" id="PS51377">
    <property type="entry name" value="KIND"/>
    <property type="match status" value="1"/>
</dbReference>
<dbReference type="PROSITE" id="PS51082">
    <property type="entry name" value="WH2"/>
    <property type="match status" value="2"/>
</dbReference>
<gene>
    <name evidence="3" type="primary">spir</name>
    <name type="ORF">GA10053</name>
</gene>
<name>SPIR_DROPS</name>
<keyword id="KW-0009">Actin-binding</keyword>
<keyword id="KW-1003">Cell membrane</keyword>
<keyword id="KW-0175">Coiled coil</keyword>
<keyword id="KW-0963">Cytoplasm</keyword>
<keyword id="KW-0968">Cytoplasmic vesicle</keyword>
<keyword id="KW-0206">Cytoskeleton</keyword>
<keyword id="KW-0217">Developmental protein</keyword>
<keyword id="KW-0472">Membrane</keyword>
<keyword id="KW-0597">Phosphoprotein</keyword>
<keyword id="KW-0653">Protein transport</keyword>
<keyword id="KW-1185">Reference proteome</keyword>
<keyword id="KW-0677">Repeat</keyword>
<keyword id="KW-0813">Transport</keyword>
<protein>
    <recommendedName>
        <fullName>Protein spire</fullName>
    </recommendedName>
</protein>
<reference key="1">
    <citation type="journal article" date="2005" name="Genome Res.">
        <title>Comparative genome sequencing of Drosophila pseudoobscura: chromosomal, gene, and cis-element evolution.</title>
        <authorList>
            <person name="Richards S."/>
            <person name="Liu Y."/>
            <person name="Bettencourt B.R."/>
            <person name="Hradecky P."/>
            <person name="Letovsky S."/>
            <person name="Nielsen R."/>
            <person name="Thornton K."/>
            <person name="Hubisz M.J."/>
            <person name="Chen R."/>
            <person name="Meisel R.P."/>
            <person name="Couronne O."/>
            <person name="Hua S."/>
            <person name="Smith M.A."/>
            <person name="Zhang P."/>
            <person name="Liu J."/>
            <person name="Bussemaker H.J."/>
            <person name="van Batenburg M.F."/>
            <person name="Howells S.L."/>
            <person name="Scherer S.E."/>
            <person name="Sodergren E."/>
            <person name="Matthews B.B."/>
            <person name="Crosby M.A."/>
            <person name="Schroeder A.J."/>
            <person name="Ortiz-Barrientos D."/>
            <person name="Rives C.M."/>
            <person name="Metzker M.L."/>
            <person name="Muzny D.M."/>
            <person name="Scott G."/>
            <person name="Steffen D."/>
            <person name="Wheeler D.A."/>
            <person name="Worley K.C."/>
            <person name="Havlak P."/>
            <person name="Durbin K.J."/>
            <person name="Egan A."/>
            <person name="Gill R."/>
            <person name="Hume J."/>
            <person name="Morgan M.B."/>
            <person name="Miner G."/>
            <person name="Hamilton C."/>
            <person name="Huang Y."/>
            <person name="Waldron L."/>
            <person name="Verduzco D."/>
            <person name="Clerc-Blankenburg K.P."/>
            <person name="Dubchak I."/>
            <person name="Noor M.A.F."/>
            <person name="Anderson W."/>
            <person name="White K.P."/>
            <person name="Clark A.G."/>
            <person name="Schaeffer S.W."/>
            <person name="Gelbart W.M."/>
            <person name="Weinstock G.M."/>
            <person name="Gibbs R.A."/>
        </authorList>
    </citation>
    <scope>NUCLEOTIDE SEQUENCE [LARGE SCALE GENOMIC DNA]</scope>
    <source>
        <strain>MV2-25 / Tucson 14011-0121.94</strain>
    </source>
</reference>
<sequence>MTEHHMDVQADATQSASESKAMAAPKGKFSEAEEGFLSTSPDSANGDAQQAHTHTHIISHTHSKGAAKTQTQTQNGNGTLGMGLGAPMLPGGSRQLLRQAFYQCSCPEQCVTLNNILDSFKAPLSEDQAWALIYQFGSLYYKVAAQAHKSGGDYEADLPSRFELHFHRDGNVHFSGAERLPELVESQEQEASQQEQQQKQPQMDDSATSSVDSNAALDRAFDNNNHEHHHHHHHQHHHPVDSNAALDRAHHTPLVVSHRKIISEMAEIVYTALDYNLPEDEECQMSQELENLFNFMTADETDEDCIDEGIDEGDKRWDDEAEEERNDTKELEHIIETCRNHLQKPALADNHYKAVCRALATETIELRVFLQQVLNNGAEKLIKAAESSPTTQKELAKLGFNDWARFWVQVIDELRRGVRLKKSNFERTPIEYELTPYEILMGDIRAKKYQLRKVMVNGDIPPRVKKDAHAMILEFIRSRPPLKKASERQLGPPRMCTPTPREQLMESIRQGKELKQITPPEAPPLRQRMLPSANSTLSRSRQRLIKVDFSQLQDDELFFDDSSMSSSHSTAATHQHHQQHQPHHAHLAELHRCSQPKMPPYPFGGYMVPSQARQECQATATQLRPRRTMDTSAPRQTLPQPQAQARPPPPAEPSFTEDEYHRFFDNALESYDLATQCESRRASLRRHTIVGCQSNLEETHSMPPTRPESRQSDDAGSQSQSGASSEAPGIRKSPLMEGDHSQTTDGPPRLDEAHSTSSLGPWNKSFMDKQTWMERGDDRLSVTLAEIVHIRSVMTKAELEGLPMDVRVKEDVEKRRVCFLCLRTRFSFFGPWGIQCKLCQRTVCAKCYTKMRIPSEHFRNVPLVLISPSLLSSPASSSTPSPSHHAHQAHSSSTGNIMDDQFPKSLIERLLRSESDRKTRSTVGSAPSSPKHQRSNMSTPGISVGPGAGASTSAAPGHAVEALHDQAAMSASYSSAMRPSGVMQHHQKHHYNNAMSRSMEGPRSLPVHSPAYRPLSNSSTLERKSRFSRGFALFSSGSHLAQTQDQKENLRGEQVPVCNDCQGLVNEITSSVKQKRSSARNRTIQNLTLDLTPVWK</sequence>
<feature type="chain" id="PRO_0000309574" description="Protein spire">
    <location>
        <begin position="1"/>
        <end position="1096"/>
    </location>
</feature>
<feature type="domain" description="KIND" evidence="6">
    <location>
        <begin position="111"/>
        <end position="366"/>
    </location>
</feature>
<feature type="domain" description="WH2 1" evidence="5">
    <location>
        <begin position="436"/>
        <end position="454"/>
    </location>
</feature>
<feature type="domain" description="WH2 2" evidence="5">
    <location>
        <begin position="500"/>
        <end position="517"/>
    </location>
</feature>
<feature type="region of interest" description="Disordered" evidence="7">
    <location>
        <begin position="1"/>
        <end position="79"/>
    </location>
</feature>
<feature type="region of interest" description="Disordered" evidence="7">
    <location>
        <begin position="184"/>
        <end position="211"/>
    </location>
</feature>
<feature type="region of interest" description="Disordered" evidence="7">
    <location>
        <begin position="560"/>
        <end position="588"/>
    </location>
</feature>
<feature type="region of interest" description="Disordered" evidence="7">
    <location>
        <begin position="614"/>
        <end position="656"/>
    </location>
</feature>
<feature type="region of interest" description="Disordered" evidence="7">
    <location>
        <begin position="693"/>
        <end position="762"/>
    </location>
</feature>
<feature type="region of interest" description="Spir-box">
    <location>
        <begin position="780"/>
        <end position="800"/>
    </location>
</feature>
<feature type="region of interest" description="Disordered" evidence="7">
    <location>
        <begin position="874"/>
        <end position="899"/>
    </location>
</feature>
<feature type="region of interest" description="Disordered" evidence="7">
    <location>
        <begin position="912"/>
        <end position="958"/>
    </location>
</feature>
<feature type="region of interest" description="Disordered" evidence="7">
    <location>
        <begin position="997"/>
        <end position="1021"/>
    </location>
</feature>
<feature type="coiled-coil region" evidence="4">
    <location>
        <begin position="315"/>
        <end position="340"/>
    </location>
</feature>
<feature type="compositionally biased region" description="Polar residues" evidence="7">
    <location>
        <begin position="37"/>
        <end position="51"/>
    </location>
</feature>
<feature type="compositionally biased region" description="Basic residues" evidence="7">
    <location>
        <begin position="53"/>
        <end position="65"/>
    </location>
</feature>
<feature type="compositionally biased region" description="Low complexity" evidence="7">
    <location>
        <begin position="66"/>
        <end position="77"/>
    </location>
</feature>
<feature type="compositionally biased region" description="Low complexity" evidence="7">
    <location>
        <begin position="189"/>
        <end position="201"/>
    </location>
</feature>
<feature type="compositionally biased region" description="Basic residues" evidence="7">
    <location>
        <begin position="574"/>
        <end position="585"/>
    </location>
</feature>
<feature type="compositionally biased region" description="Low complexity" evidence="7">
    <location>
        <begin position="633"/>
        <end position="645"/>
    </location>
</feature>
<feature type="compositionally biased region" description="Low complexity" evidence="7">
    <location>
        <begin position="714"/>
        <end position="725"/>
    </location>
</feature>
<feature type="compositionally biased region" description="Basic and acidic residues" evidence="7">
    <location>
        <begin position="737"/>
        <end position="754"/>
    </location>
</feature>
<feature type="compositionally biased region" description="Low complexity" evidence="7">
    <location>
        <begin position="874"/>
        <end position="894"/>
    </location>
</feature>
<feature type="compositionally biased region" description="Polar residues" evidence="7">
    <location>
        <begin position="921"/>
        <end position="941"/>
    </location>
</feature>